<evidence type="ECO:0000255" key="1">
    <source>
        <dbReference type="HAMAP-Rule" id="MF_00163"/>
    </source>
</evidence>
<feature type="chain" id="PRO_0000082815" description="Peptide deformylase">
    <location>
        <begin position="1"/>
        <end position="203"/>
    </location>
</feature>
<feature type="active site" evidence="1">
    <location>
        <position position="164"/>
    </location>
</feature>
<feature type="binding site" evidence="1">
    <location>
        <position position="121"/>
    </location>
    <ligand>
        <name>Fe cation</name>
        <dbReference type="ChEBI" id="CHEBI:24875"/>
    </ligand>
</feature>
<feature type="binding site" evidence="1">
    <location>
        <position position="163"/>
    </location>
    <ligand>
        <name>Fe cation</name>
        <dbReference type="ChEBI" id="CHEBI:24875"/>
    </ligand>
</feature>
<feature type="binding site" evidence="1">
    <location>
        <position position="167"/>
    </location>
    <ligand>
        <name>Fe cation</name>
        <dbReference type="ChEBI" id="CHEBI:24875"/>
    </ligand>
</feature>
<accession>Q7VED2</accession>
<dbReference type="EC" id="3.5.1.88" evidence="1"/>
<dbReference type="EMBL" id="AE017126">
    <property type="protein sequence ID" value="AAP99127.1"/>
    <property type="molecule type" value="Genomic_DNA"/>
</dbReference>
<dbReference type="RefSeq" id="NP_874475.1">
    <property type="nucleotide sequence ID" value="NC_005042.1"/>
</dbReference>
<dbReference type="RefSeq" id="WP_011124236.1">
    <property type="nucleotide sequence ID" value="NC_005042.1"/>
</dbReference>
<dbReference type="SMR" id="Q7VED2"/>
<dbReference type="STRING" id="167539.Pro_0081"/>
<dbReference type="EnsemblBacteria" id="AAP99127">
    <property type="protein sequence ID" value="AAP99127"/>
    <property type="gene ID" value="Pro_0081"/>
</dbReference>
<dbReference type="KEGG" id="pma:Pro_0081"/>
<dbReference type="PATRIC" id="fig|167539.5.peg.85"/>
<dbReference type="eggNOG" id="COG0242">
    <property type="taxonomic scope" value="Bacteria"/>
</dbReference>
<dbReference type="HOGENOM" id="CLU_061901_4_2_3"/>
<dbReference type="OrthoDB" id="9784988at2"/>
<dbReference type="Proteomes" id="UP000001420">
    <property type="component" value="Chromosome"/>
</dbReference>
<dbReference type="GO" id="GO:0046872">
    <property type="term" value="F:metal ion binding"/>
    <property type="evidence" value="ECO:0007669"/>
    <property type="project" value="UniProtKB-KW"/>
</dbReference>
<dbReference type="GO" id="GO:0042586">
    <property type="term" value="F:peptide deformylase activity"/>
    <property type="evidence" value="ECO:0007669"/>
    <property type="project" value="UniProtKB-UniRule"/>
</dbReference>
<dbReference type="GO" id="GO:0043686">
    <property type="term" value="P:co-translational protein modification"/>
    <property type="evidence" value="ECO:0007669"/>
    <property type="project" value="TreeGrafter"/>
</dbReference>
<dbReference type="GO" id="GO:0006412">
    <property type="term" value="P:translation"/>
    <property type="evidence" value="ECO:0007669"/>
    <property type="project" value="UniProtKB-UniRule"/>
</dbReference>
<dbReference type="CDD" id="cd00487">
    <property type="entry name" value="Pep_deformylase"/>
    <property type="match status" value="1"/>
</dbReference>
<dbReference type="FunFam" id="3.90.45.10:FF:000005">
    <property type="entry name" value="Peptide deformylase"/>
    <property type="match status" value="1"/>
</dbReference>
<dbReference type="Gene3D" id="3.90.45.10">
    <property type="entry name" value="Peptide deformylase"/>
    <property type="match status" value="1"/>
</dbReference>
<dbReference type="HAMAP" id="MF_00163">
    <property type="entry name" value="Pep_deformylase"/>
    <property type="match status" value="1"/>
</dbReference>
<dbReference type="InterPro" id="IPR023635">
    <property type="entry name" value="Peptide_deformylase"/>
</dbReference>
<dbReference type="InterPro" id="IPR036821">
    <property type="entry name" value="Peptide_deformylase_sf"/>
</dbReference>
<dbReference type="NCBIfam" id="TIGR00079">
    <property type="entry name" value="pept_deformyl"/>
    <property type="match status" value="1"/>
</dbReference>
<dbReference type="NCBIfam" id="NF001159">
    <property type="entry name" value="PRK00150.1-3"/>
    <property type="match status" value="1"/>
</dbReference>
<dbReference type="PANTHER" id="PTHR10458">
    <property type="entry name" value="PEPTIDE DEFORMYLASE"/>
    <property type="match status" value="1"/>
</dbReference>
<dbReference type="PANTHER" id="PTHR10458:SF22">
    <property type="entry name" value="PEPTIDE DEFORMYLASE"/>
    <property type="match status" value="1"/>
</dbReference>
<dbReference type="Pfam" id="PF01327">
    <property type="entry name" value="Pep_deformylase"/>
    <property type="match status" value="1"/>
</dbReference>
<dbReference type="PIRSF" id="PIRSF004749">
    <property type="entry name" value="Pep_def"/>
    <property type="match status" value="1"/>
</dbReference>
<dbReference type="PRINTS" id="PR01576">
    <property type="entry name" value="PDEFORMYLASE"/>
</dbReference>
<dbReference type="SUPFAM" id="SSF56420">
    <property type="entry name" value="Peptide deformylase"/>
    <property type="match status" value="1"/>
</dbReference>
<sequence length="203" mass="22616">MARSFSQLAINAEKQRTSLAVSKKPTDQPELEIHTLGNSALRQSAKRISKVDKNIRDLVKKMLHSMYAAKGIGLAAPQIGSQQQLLVIDLDIENSATPPIILINPEITEFSATIDTYEEGCLSIPGVYLDVIRPSSIKVNFRDEMGRPKKINADGLLARCIQHEMDHLNGVLFVDRAINEEALNKELKEHGFKKKDVLRLCSD</sequence>
<gene>
    <name evidence="1" type="primary">def</name>
    <name type="ordered locus">Pro_0081</name>
</gene>
<keyword id="KW-0378">Hydrolase</keyword>
<keyword id="KW-0408">Iron</keyword>
<keyword id="KW-0479">Metal-binding</keyword>
<keyword id="KW-0648">Protein biosynthesis</keyword>
<keyword id="KW-1185">Reference proteome</keyword>
<protein>
    <recommendedName>
        <fullName evidence="1">Peptide deformylase</fullName>
        <shortName evidence="1">PDF</shortName>
        <ecNumber evidence="1">3.5.1.88</ecNumber>
    </recommendedName>
    <alternativeName>
        <fullName evidence="1">Polypeptide deformylase</fullName>
    </alternativeName>
</protein>
<name>DEF_PROMA</name>
<reference key="1">
    <citation type="journal article" date="2003" name="Proc. Natl. Acad. Sci. U.S.A.">
        <title>Genome sequence of the cyanobacterium Prochlorococcus marinus SS120, a nearly minimal oxyphototrophic genome.</title>
        <authorList>
            <person name="Dufresne A."/>
            <person name="Salanoubat M."/>
            <person name="Partensky F."/>
            <person name="Artiguenave F."/>
            <person name="Axmann I.M."/>
            <person name="Barbe V."/>
            <person name="Duprat S."/>
            <person name="Galperin M.Y."/>
            <person name="Koonin E.V."/>
            <person name="Le Gall F."/>
            <person name="Makarova K.S."/>
            <person name="Ostrowski M."/>
            <person name="Oztas S."/>
            <person name="Robert C."/>
            <person name="Rogozin I.B."/>
            <person name="Scanlan D.J."/>
            <person name="Tandeau de Marsac N."/>
            <person name="Weissenbach J."/>
            <person name="Wincker P."/>
            <person name="Wolf Y.I."/>
            <person name="Hess W.R."/>
        </authorList>
    </citation>
    <scope>NUCLEOTIDE SEQUENCE [LARGE SCALE GENOMIC DNA]</scope>
    <source>
        <strain>SARG / CCMP1375 / SS120</strain>
    </source>
</reference>
<proteinExistence type="inferred from homology"/>
<comment type="function">
    <text evidence="1">Removes the formyl group from the N-terminal Met of newly synthesized proteins. Requires at least a dipeptide for an efficient rate of reaction. N-terminal L-methionine is a prerequisite for activity but the enzyme has broad specificity at other positions.</text>
</comment>
<comment type="catalytic activity">
    <reaction evidence="1">
        <text>N-terminal N-formyl-L-methionyl-[peptide] + H2O = N-terminal L-methionyl-[peptide] + formate</text>
        <dbReference type="Rhea" id="RHEA:24420"/>
        <dbReference type="Rhea" id="RHEA-COMP:10639"/>
        <dbReference type="Rhea" id="RHEA-COMP:10640"/>
        <dbReference type="ChEBI" id="CHEBI:15377"/>
        <dbReference type="ChEBI" id="CHEBI:15740"/>
        <dbReference type="ChEBI" id="CHEBI:49298"/>
        <dbReference type="ChEBI" id="CHEBI:64731"/>
        <dbReference type="EC" id="3.5.1.88"/>
    </reaction>
</comment>
<comment type="cofactor">
    <cofactor evidence="1">
        <name>Fe(2+)</name>
        <dbReference type="ChEBI" id="CHEBI:29033"/>
    </cofactor>
    <text evidence="1">Binds 1 Fe(2+) ion.</text>
</comment>
<comment type="similarity">
    <text evidence="1">Belongs to the polypeptide deformylase family.</text>
</comment>
<organism>
    <name type="scientific">Prochlorococcus marinus (strain SARG / CCMP1375 / SS120)</name>
    <dbReference type="NCBI Taxonomy" id="167539"/>
    <lineage>
        <taxon>Bacteria</taxon>
        <taxon>Bacillati</taxon>
        <taxon>Cyanobacteriota</taxon>
        <taxon>Cyanophyceae</taxon>
        <taxon>Synechococcales</taxon>
        <taxon>Prochlorococcaceae</taxon>
        <taxon>Prochlorococcus</taxon>
    </lineage>
</organism>